<reference key="1">
    <citation type="submission" date="2008-01" db="EMBL/GenBank/DDBJ databases">
        <title>Complete sequence of Thermoanaerobacter sp. X514.</title>
        <authorList>
            <consortium name="US DOE Joint Genome Institute"/>
            <person name="Copeland A."/>
            <person name="Lucas S."/>
            <person name="Lapidus A."/>
            <person name="Barry K."/>
            <person name="Glavina del Rio T."/>
            <person name="Dalin E."/>
            <person name="Tice H."/>
            <person name="Pitluck S."/>
            <person name="Bruce D."/>
            <person name="Goodwin L."/>
            <person name="Saunders E."/>
            <person name="Brettin T."/>
            <person name="Detter J.C."/>
            <person name="Han C."/>
            <person name="Schmutz J."/>
            <person name="Larimer F."/>
            <person name="Land M."/>
            <person name="Hauser L."/>
            <person name="Kyrpides N."/>
            <person name="Kim E."/>
            <person name="Hemme C."/>
            <person name="Fields M.W."/>
            <person name="He Z."/>
            <person name="Zhou J."/>
            <person name="Richardson P."/>
        </authorList>
    </citation>
    <scope>NUCLEOTIDE SEQUENCE [LARGE SCALE GENOMIC DNA]</scope>
    <source>
        <strain>X514</strain>
    </source>
</reference>
<organism>
    <name type="scientific">Thermoanaerobacter sp. (strain X514)</name>
    <dbReference type="NCBI Taxonomy" id="399726"/>
    <lineage>
        <taxon>Bacteria</taxon>
        <taxon>Bacillati</taxon>
        <taxon>Bacillota</taxon>
        <taxon>Clostridia</taxon>
        <taxon>Thermoanaerobacterales</taxon>
        <taxon>Thermoanaerobacteraceae</taxon>
        <taxon>Thermoanaerobacter</taxon>
    </lineage>
</organism>
<evidence type="ECO:0000255" key="1">
    <source>
        <dbReference type="HAMAP-Rule" id="MF_00274"/>
    </source>
</evidence>
<sequence length="111" mass="11947">MAKGGFPGGFNINNMIKQAQQMQEEIKKMQEELMQKTVEATVGGGMVKAVANGRKELVSIEINPAVVDKDDVETLEDLVLAAVNQALRNAEEMIASEMAKITGGLNIPGLF</sequence>
<dbReference type="EMBL" id="CP000923">
    <property type="protein sequence ID" value="ABY91357.1"/>
    <property type="molecule type" value="Genomic_DNA"/>
</dbReference>
<dbReference type="RefSeq" id="WP_003867376.1">
    <property type="nucleotide sequence ID" value="NC_010320.1"/>
</dbReference>
<dbReference type="SMR" id="B0K100"/>
<dbReference type="KEGG" id="tex:Teth514_0034"/>
<dbReference type="HOGENOM" id="CLU_140930_1_0_9"/>
<dbReference type="Proteomes" id="UP000002155">
    <property type="component" value="Chromosome"/>
</dbReference>
<dbReference type="GO" id="GO:0043590">
    <property type="term" value="C:bacterial nucleoid"/>
    <property type="evidence" value="ECO:0007669"/>
    <property type="project" value="UniProtKB-UniRule"/>
</dbReference>
<dbReference type="GO" id="GO:0005829">
    <property type="term" value="C:cytosol"/>
    <property type="evidence" value="ECO:0007669"/>
    <property type="project" value="TreeGrafter"/>
</dbReference>
<dbReference type="GO" id="GO:0003677">
    <property type="term" value="F:DNA binding"/>
    <property type="evidence" value="ECO:0007669"/>
    <property type="project" value="UniProtKB-UniRule"/>
</dbReference>
<dbReference type="Gene3D" id="3.30.1310.10">
    <property type="entry name" value="Nucleoid-associated protein YbaB-like domain"/>
    <property type="match status" value="1"/>
</dbReference>
<dbReference type="HAMAP" id="MF_00274">
    <property type="entry name" value="DNA_YbaB_EbfC"/>
    <property type="match status" value="1"/>
</dbReference>
<dbReference type="InterPro" id="IPR036894">
    <property type="entry name" value="YbaB-like_sf"/>
</dbReference>
<dbReference type="InterPro" id="IPR004401">
    <property type="entry name" value="YbaB/EbfC"/>
</dbReference>
<dbReference type="NCBIfam" id="TIGR00103">
    <property type="entry name" value="DNA_YbaB_EbfC"/>
    <property type="match status" value="1"/>
</dbReference>
<dbReference type="PANTHER" id="PTHR33449">
    <property type="entry name" value="NUCLEOID-ASSOCIATED PROTEIN YBAB"/>
    <property type="match status" value="1"/>
</dbReference>
<dbReference type="PANTHER" id="PTHR33449:SF1">
    <property type="entry name" value="NUCLEOID-ASSOCIATED PROTEIN YBAB"/>
    <property type="match status" value="1"/>
</dbReference>
<dbReference type="Pfam" id="PF02575">
    <property type="entry name" value="YbaB_DNA_bd"/>
    <property type="match status" value="1"/>
</dbReference>
<dbReference type="PIRSF" id="PIRSF004555">
    <property type="entry name" value="UCP004555"/>
    <property type="match status" value="1"/>
</dbReference>
<dbReference type="SUPFAM" id="SSF82607">
    <property type="entry name" value="YbaB-like"/>
    <property type="match status" value="1"/>
</dbReference>
<comment type="function">
    <text evidence="1">Binds to DNA and alters its conformation. May be involved in regulation of gene expression, nucleoid organization and DNA protection.</text>
</comment>
<comment type="subunit">
    <text evidence="1">Homodimer.</text>
</comment>
<comment type="subcellular location">
    <subcellularLocation>
        <location evidence="1">Cytoplasm</location>
        <location evidence="1">Nucleoid</location>
    </subcellularLocation>
</comment>
<comment type="similarity">
    <text evidence="1">Belongs to the YbaB/EbfC family.</text>
</comment>
<name>Y034_THEPX</name>
<proteinExistence type="inferred from homology"/>
<feature type="chain" id="PRO_1000114659" description="Nucleoid-associated protein Teth514_0034">
    <location>
        <begin position="1"/>
        <end position="111"/>
    </location>
</feature>
<gene>
    <name type="ordered locus">Teth514_0034</name>
</gene>
<protein>
    <recommendedName>
        <fullName evidence="1">Nucleoid-associated protein Teth514_0034</fullName>
    </recommendedName>
</protein>
<keyword id="KW-0963">Cytoplasm</keyword>
<keyword id="KW-0238">DNA-binding</keyword>
<accession>B0K100</accession>